<protein>
    <recommendedName>
        <fullName evidence="1">D-ribose pyranase</fullName>
        <ecNumber evidence="1">5.4.99.62</ecNumber>
    </recommendedName>
</protein>
<evidence type="ECO:0000255" key="1">
    <source>
        <dbReference type="HAMAP-Rule" id="MF_01661"/>
    </source>
</evidence>
<keyword id="KW-0119">Carbohydrate metabolism</keyword>
<keyword id="KW-0963">Cytoplasm</keyword>
<keyword id="KW-0413">Isomerase</keyword>
<organism>
    <name type="scientific">Shigella flexneri serotype 5b (strain 8401)</name>
    <dbReference type="NCBI Taxonomy" id="373384"/>
    <lineage>
        <taxon>Bacteria</taxon>
        <taxon>Pseudomonadati</taxon>
        <taxon>Pseudomonadota</taxon>
        <taxon>Gammaproteobacteria</taxon>
        <taxon>Enterobacterales</taxon>
        <taxon>Enterobacteriaceae</taxon>
        <taxon>Shigella</taxon>
    </lineage>
</organism>
<feature type="chain" id="PRO_0000346259" description="D-ribose pyranase">
    <location>
        <begin position="1"/>
        <end position="139"/>
    </location>
</feature>
<feature type="active site" description="Proton donor" evidence="1">
    <location>
        <position position="20"/>
    </location>
</feature>
<feature type="binding site" evidence="1">
    <location>
        <position position="28"/>
    </location>
    <ligand>
        <name>substrate</name>
    </ligand>
</feature>
<feature type="binding site" evidence="1">
    <location>
        <position position="106"/>
    </location>
    <ligand>
        <name>substrate</name>
    </ligand>
</feature>
<feature type="binding site" evidence="1">
    <location>
        <begin position="128"/>
        <end position="130"/>
    </location>
    <ligand>
        <name>substrate</name>
    </ligand>
</feature>
<sequence>MKKGTVLNSDISSVISRLGHTDTLVVCDAGLPIPKSTTRIDMALTQGVPSFMQVLGVVTNEMQVEAAIIAEEIKQHNPQLHETLLTHLEQLQKHQGNTIEIRYTTHEQFKQQTAESQAVIRSGECSPYANIILCAGVTF</sequence>
<accession>Q0SYV0</accession>
<proteinExistence type="inferred from homology"/>
<reference key="1">
    <citation type="journal article" date="2006" name="BMC Genomics">
        <title>Complete genome sequence of Shigella flexneri 5b and comparison with Shigella flexneri 2a.</title>
        <authorList>
            <person name="Nie H."/>
            <person name="Yang F."/>
            <person name="Zhang X."/>
            <person name="Yang J."/>
            <person name="Chen L."/>
            <person name="Wang J."/>
            <person name="Xiong Z."/>
            <person name="Peng J."/>
            <person name="Sun L."/>
            <person name="Dong J."/>
            <person name="Xue Y."/>
            <person name="Xu X."/>
            <person name="Chen S."/>
            <person name="Yao Z."/>
            <person name="Shen Y."/>
            <person name="Jin Q."/>
        </authorList>
    </citation>
    <scope>NUCLEOTIDE SEQUENCE [LARGE SCALE GENOMIC DNA]</scope>
    <source>
        <strain>8401</strain>
    </source>
</reference>
<comment type="function">
    <text evidence="1">Catalyzes the interconversion of beta-pyran and beta-furan forms of D-ribose.</text>
</comment>
<comment type="catalytic activity">
    <reaction evidence="1">
        <text>beta-D-ribopyranose = beta-D-ribofuranose</text>
        <dbReference type="Rhea" id="RHEA:25432"/>
        <dbReference type="ChEBI" id="CHEBI:27476"/>
        <dbReference type="ChEBI" id="CHEBI:47002"/>
        <dbReference type="EC" id="5.4.99.62"/>
    </reaction>
</comment>
<comment type="pathway">
    <text evidence="1">Carbohydrate metabolism; D-ribose degradation; D-ribose 5-phosphate from beta-D-ribopyranose: step 1/2.</text>
</comment>
<comment type="subunit">
    <text evidence="1">Homodecamer.</text>
</comment>
<comment type="subcellular location">
    <subcellularLocation>
        <location evidence="1">Cytoplasm</location>
    </subcellularLocation>
</comment>
<comment type="similarity">
    <text evidence="1">Belongs to the RbsD / FucU family. RbsD subfamily.</text>
</comment>
<dbReference type="EC" id="5.4.99.62" evidence="1"/>
<dbReference type="EMBL" id="CP000266">
    <property type="protein sequence ID" value="ABF05765.1"/>
    <property type="molecule type" value="Genomic_DNA"/>
</dbReference>
<dbReference type="RefSeq" id="WP_000715936.1">
    <property type="nucleotide sequence ID" value="NC_008258.1"/>
</dbReference>
<dbReference type="SMR" id="Q0SYV0"/>
<dbReference type="GeneID" id="93778201"/>
<dbReference type="KEGG" id="sfv:SFV_3752"/>
<dbReference type="HOGENOM" id="CLU_135498_0_0_6"/>
<dbReference type="UniPathway" id="UPA00916">
    <property type="reaction ID" value="UER00888"/>
</dbReference>
<dbReference type="Proteomes" id="UP000000659">
    <property type="component" value="Chromosome"/>
</dbReference>
<dbReference type="GO" id="GO:0005829">
    <property type="term" value="C:cytosol"/>
    <property type="evidence" value="ECO:0007669"/>
    <property type="project" value="TreeGrafter"/>
</dbReference>
<dbReference type="GO" id="GO:0062193">
    <property type="term" value="F:D-ribose pyranase activity"/>
    <property type="evidence" value="ECO:0007669"/>
    <property type="project" value="UniProtKB-EC"/>
</dbReference>
<dbReference type="GO" id="GO:0016872">
    <property type="term" value="F:intramolecular lyase activity"/>
    <property type="evidence" value="ECO:0007669"/>
    <property type="project" value="UniProtKB-UniRule"/>
</dbReference>
<dbReference type="GO" id="GO:0048029">
    <property type="term" value="F:monosaccharide binding"/>
    <property type="evidence" value="ECO:0007669"/>
    <property type="project" value="InterPro"/>
</dbReference>
<dbReference type="GO" id="GO:0019303">
    <property type="term" value="P:D-ribose catabolic process"/>
    <property type="evidence" value="ECO:0007669"/>
    <property type="project" value="UniProtKB-UniRule"/>
</dbReference>
<dbReference type="FunFam" id="3.40.1650.10:FF:000002">
    <property type="entry name" value="D-ribose pyranase"/>
    <property type="match status" value="1"/>
</dbReference>
<dbReference type="Gene3D" id="3.40.1650.10">
    <property type="entry name" value="RbsD-like domain"/>
    <property type="match status" value="1"/>
</dbReference>
<dbReference type="HAMAP" id="MF_01661">
    <property type="entry name" value="D_rib_pyranase"/>
    <property type="match status" value="1"/>
</dbReference>
<dbReference type="InterPro" id="IPR023064">
    <property type="entry name" value="D-ribose_pyranase"/>
</dbReference>
<dbReference type="InterPro" id="IPR023750">
    <property type="entry name" value="RbsD-like_sf"/>
</dbReference>
<dbReference type="InterPro" id="IPR007721">
    <property type="entry name" value="RbsD_FucU"/>
</dbReference>
<dbReference type="NCBIfam" id="NF008761">
    <property type="entry name" value="PRK11797.1"/>
    <property type="match status" value="1"/>
</dbReference>
<dbReference type="PANTHER" id="PTHR37831">
    <property type="entry name" value="D-RIBOSE PYRANASE"/>
    <property type="match status" value="1"/>
</dbReference>
<dbReference type="PANTHER" id="PTHR37831:SF1">
    <property type="entry name" value="D-RIBOSE PYRANASE"/>
    <property type="match status" value="1"/>
</dbReference>
<dbReference type="Pfam" id="PF05025">
    <property type="entry name" value="RbsD_FucU"/>
    <property type="match status" value="1"/>
</dbReference>
<dbReference type="SUPFAM" id="SSF102546">
    <property type="entry name" value="RbsD-like"/>
    <property type="match status" value="1"/>
</dbReference>
<gene>
    <name evidence="1" type="primary">rbsD</name>
    <name type="ordered locus">SFV_3752</name>
</gene>
<name>RBSD_SHIF8</name>